<sequence length="162" mass="18926">MTNFLIVVATVLVMELTAYSVHRWIMHGPLGWGWHKSHHEEHDHALEKNDLYGLVFAVIATVLFTVGWIWAPVLWWIALGMTVYGLIYFVLHDGLVHQRWPFRYIPRKGYARRLYQAHRLHHAVEGRDHCVSFGFIYAPPVDKLKQDLKMSGVLRAEAQERT</sequence>
<keyword id="KW-0125">Carotenoid biosynthesis</keyword>
<keyword id="KW-0560">Oxidoreductase</keyword>
<name>CRTZ_PARSN</name>
<gene>
    <name type="primary">crtZ</name>
</gene>
<accession>P54973</accession>
<accession>Q33DT9</accession>
<organism>
    <name type="scientific">Paracoccus sp. (strain N81106 / MBIC 01143)</name>
    <name type="common">Agrobacterium aurantiacum</name>
    <dbReference type="NCBI Taxonomy" id="81397"/>
    <lineage>
        <taxon>Bacteria</taxon>
        <taxon>Pseudomonadati</taxon>
        <taxon>Pseudomonadota</taxon>
        <taxon>Alphaproteobacteria</taxon>
        <taxon>Rhodobacterales</taxon>
        <taxon>Paracoccaceae</taxon>
        <taxon>Paracoccus</taxon>
    </lineage>
</organism>
<reference key="1">
    <citation type="journal article" date="1995" name="J. Bacteriol.">
        <title>Structure and functional analysis of a marine bacterial carotenoid biosynthesis gene cluster and astaxanthin biosynthetic pathway proposed at the gene level.</title>
        <authorList>
            <person name="Misawa N."/>
            <person name="Satomi Y."/>
            <person name="Kondo K."/>
            <person name="Yokoyama A."/>
            <person name="Kajiwara S."/>
            <person name="Saito T."/>
            <person name="Ohtani T."/>
            <person name="Miki W."/>
        </authorList>
    </citation>
    <scope>NUCLEOTIDE SEQUENCE [GENOMIC DNA]</scope>
</reference>
<reference key="2">
    <citation type="submission" date="2005-03" db="EMBL/GenBank/DDBJ databases">
        <title>Structure of the complete carotenoid biosynthesis gene cluster of Paracoccus sp. strain N81106.</title>
        <authorList>
            <person name="Maruyama T."/>
            <person name="Inomata Y."/>
            <person name="Haga M."/>
            <person name="Ide T."/>
            <person name="Misawa N."/>
        </authorList>
    </citation>
    <scope>NUCLEOTIDE SEQUENCE [GENOMIC DNA]</scope>
</reference>
<protein>
    <recommendedName>
        <fullName>Beta-carotene hydroxylase</fullName>
        <ecNumber evidence="1">1.14.15.24</ecNumber>
    </recommendedName>
</protein>
<feature type="chain" id="PRO_0000079376" description="Beta-carotene hydroxylase">
    <location>
        <begin position="1"/>
        <end position="162"/>
    </location>
</feature>
<feature type="domain" description="Fatty acid hydroxylase" evidence="2">
    <location>
        <begin position="8"/>
        <end position="135"/>
    </location>
</feature>
<proteinExistence type="inferred from homology"/>
<evidence type="ECO:0000250" key="1">
    <source>
        <dbReference type="UniProtKB" id="Q9SZZ8"/>
    </source>
</evidence>
<evidence type="ECO:0000255" key="2"/>
<evidence type="ECO:0000305" key="3"/>
<dbReference type="EC" id="1.14.15.24" evidence="1"/>
<dbReference type="EMBL" id="D58420">
    <property type="protein sequence ID" value="BAA09592.1"/>
    <property type="molecule type" value="Genomic_DNA"/>
</dbReference>
<dbReference type="EMBL" id="AB206672">
    <property type="protein sequence ID" value="BAE47466.1"/>
    <property type="molecule type" value="Genomic_DNA"/>
</dbReference>
<dbReference type="BRENDA" id="1.14.15.24">
    <property type="organism ID" value="4532"/>
</dbReference>
<dbReference type="UniPathway" id="UPA00387"/>
<dbReference type="GO" id="GO:0010291">
    <property type="term" value="F:beta-carotene 3-hydroxylase activity"/>
    <property type="evidence" value="ECO:0007669"/>
    <property type="project" value="UniProtKB-EC"/>
</dbReference>
<dbReference type="GO" id="GO:0005506">
    <property type="term" value="F:iron ion binding"/>
    <property type="evidence" value="ECO:0007669"/>
    <property type="project" value="InterPro"/>
</dbReference>
<dbReference type="GO" id="GO:0016119">
    <property type="term" value="P:carotene metabolic process"/>
    <property type="evidence" value="ECO:0007669"/>
    <property type="project" value="TreeGrafter"/>
</dbReference>
<dbReference type="GO" id="GO:0016123">
    <property type="term" value="P:xanthophyll biosynthetic process"/>
    <property type="evidence" value="ECO:0007669"/>
    <property type="project" value="TreeGrafter"/>
</dbReference>
<dbReference type="InterPro" id="IPR045019">
    <property type="entry name" value="BETA-OHASE-like"/>
</dbReference>
<dbReference type="InterPro" id="IPR006694">
    <property type="entry name" value="Fatty_acid_hydroxylase"/>
</dbReference>
<dbReference type="PANTHER" id="PTHR31899">
    <property type="entry name" value="BETA-CAROTENE 3-HYDROXYLASE 1, CHLOROPLASTIC"/>
    <property type="match status" value="1"/>
</dbReference>
<dbReference type="PANTHER" id="PTHR31899:SF9">
    <property type="entry name" value="BETA-CAROTENE 3-HYDROXYLASE 1, CHLOROPLASTIC"/>
    <property type="match status" value="1"/>
</dbReference>
<dbReference type="Pfam" id="PF04116">
    <property type="entry name" value="FA_hydroxylase"/>
    <property type="match status" value="1"/>
</dbReference>
<comment type="function">
    <text>Catalyzes the hydroxylation reaction from beta-carotene to zeaxanthin via beta-cryptoxanthin.</text>
</comment>
<comment type="catalytic activity">
    <reaction evidence="1">
        <text>all-trans-beta-carotene + 4 reduced [2Fe-2S]-[ferredoxin] + 2 O2 + 4 H(+) = all-trans-zeaxanthin + 4 oxidized [2Fe-2S]-[ferredoxin] + 2 H2O</text>
        <dbReference type="Rhea" id="RHEA:30331"/>
        <dbReference type="Rhea" id="RHEA-COMP:10000"/>
        <dbReference type="Rhea" id="RHEA-COMP:10001"/>
        <dbReference type="ChEBI" id="CHEBI:15377"/>
        <dbReference type="ChEBI" id="CHEBI:15378"/>
        <dbReference type="ChEBI" id="CHEBI:15379"/>
        <dbReference type="ChEBI" id="CHEBI:17579"/>
        <dbReference type="ChEBI" id="CHEBI:27547"/>
        <dbReference type="ChEBI" id="CHEBI:33737"/>
        <dbReference type="ChEBI" id="CHEBI:33738"/>
        <dbReference type="EC" id="1.14.15.24"/>
    </reaction>
</comment>
<comment type="pathway">
    <text>Carotenoid biosynthesis; astaxanthin biosynthesis.</text>
</comment>
<comment type="similarity">
    <text evidence="3">Belongs to the sterol desaturase family.</text>
</comment>